<gene>
    <name evidence="1" type="primary">kdpA</name>
    <name type="ordered locus">Gmet_2433</name>
</gene>
<name>KDPA_GEOMG</name>
<sequence length="586" mass="62392">MTQYEWLQTTLFLVLLLAVVKPMGAFMAKVFQGERTMLSPLLVPCENLLYRICGVNRDEEMDWKRYAVAVLLFNLALFVSLFAILMLQHLLPLNPQKFPAYTWQLALNTAISFVTNTNWQAYSGESAASYFTQTVGLAVHNFVSAATGIAVAIAVIRGFARRRTSMLGNFWVDMTRCTLYVLLPISLIGALILVSQGVIQNFSDYKTVPLVQPITYDKPKADGKGNPVTGRVTVKDITIPMGPVASQEAIKELGTNGGGFFNANSAHPYENPTPISNMVEIFLILLIPFALTSTFGVMVGNTRQGWAILGVMLLMMAISFAVLQGVETSGNPLVAKLGVHGVNMEGKEVRFGLAGASLFTVATTGTSCGAVATMHDSLTPLGGMIPLGLILLGEIAPGGVGSGLYTMLAFVVIAVFVAGLMIGRTPEFLGKKIEVREMWMSIITVLAAGVVVLILSGVAMITPQAVASKANPGAHGLSEVLYAFASMANNNGSAFAGLNANVDFYTILGSLAMLVGRFAPAVAVLAMAGSLAEKKYVPPSLGTLPTDKVPFALWLMLVILIVGALTFFPALSLGPLVEHLTMLGGK</sequence>
<feature type="chain" id="PRO_1000022223" description="Potassium-transporting ATPase potassium-binding subunit">
    <location>
        <begin position="1"/>
        <end position="586"/>
    </location>
</feature>
<feature type="transmembrane region" description="Helical" evidence="1">
    <location>
        <begin position="11"/>
        <end position="31"/>
    </location>
</feature>
<feature type="transmembrane region" description="Helical" evidence="1">
    <location>
        <begin position="67"/>
        <end position="87"/>
    </location>
</feature>
<feature type="transmembrane region" description="Helical" evidence="1">
    <location>
        <begin position="136"/>
        <end position="156"/>
    </location>
</feature>
<feature type="transmembrane region" description="Helical" evidence="1">
    <location>
        <begin position="179"/>
        <end position="199"/>
    </location>
</feature>
<feature type="transmembrane region" description="Helical" evidence="1">
    <location>
        <begin position="279"/>
        <end position="299"/>
    </location>
</feature>
<feature type="transmembrane region" description="Helical" evidence="1">
    <location>
        <begin position="306"/>
        <end position="326"/>
    </location>
</feature>
<feature type="transmembrane region" description="Helical" evidence="1">
    <location>
        <begin position="351"/>
        <end position="371"/>
    </location>
</feature>
<feature type="transmembrane region" description="Helical" evidence="1">
    <location>
        <begin position="381"/>
        <end position="401"/>
    </location>
</feature>
<feature type="transmembrane region" description="Helical" evidence="1">
    <location>
        <begin position="403"/>
        <end position="423"/>
    </location>
</feature>
<feature type="transmembrane region" description="Helical" evidence="1">
    <location>
        <begin position="442"/>
        <end position="462"/>
    </location>
</feature>
<feature type="transmembrane region" description="Helical" evidence="1">
    <location>
        <begin position="507"/>
        <end position="527"/>
    </location>
</feature>
<feature type="transmembrane region" description="Helical" evidence="1">
    <location>
        <begin position="551"/>
        <end position="571"/>
    </location>
</feature>
<organism>
    <name type="scientific">Geobacter metallireducens (strain ATCC 53774 / DSM 7210 / GS-15)</name>
    <dbReference type="NCBI Taxonomy" id="269799"/>
    <lineage>
        <taxon>Bacteria</taxon>
        <taxon>Pseudomonadati</taxon>
        <taxon>Thermodesulfobacteriota</taxon>
        <taxon>Desulfuromonadia</taxon>
        <taxon>Geobacterales</taxon>
        <taxon>Geobacteraceae</taxon>
        <taxon>Geobacter</taxon>
    </lineage>
</organism>
<comment type="function">
    <text evidence="1">Part of the high-affinity ATP-driven potassium transport (or Kdp) system, which catalyzes the hydrolysis of ATP coupled with the electrogenic transport of potassium into the cytoplasm. This subunit binds the periplasmic potassium ions and delivers the ions to the membrane domain of KdpB through an intramembrane tunnel.</text>
</comment>
<comment type="subunit">
    <text evidence="1">The system is composed of three essential subunits: KdpA, KdpB and KdpC.</text>
</comment>
<comment type="subcellular location">
    <subcellularLocation>
        <location evidence="1">Cell inner membrane</location>
        <topology evidence="1">Multi-pass membrane protein</topology>
    </subcellularLocation>
</comment>
<comment type="similarity">
    <text evidence="1">Belongs to the KdpA family.</text>
</comment>
<reference key="1">
    <citation type="journal article" date="2009" name="BMC Microbiol.">
        <title>The genome sequence of Geobacter metallireducens: features of metabolism, physiology and regulation common and dissimilar to Geobacter sulfurreducens.</title>
        <authorList>
            <person name="Aklujkar M."/>
            <person name="Krushkal J."/>
            <person name="DiBartolo G."/>
            <person name="Lapidus A."/>
            <person name="Land M.L."/>
            <person name="Lovley D.R."/>
        </authorList>
    </citation>
    <scope>NUCLEOTIDE SEQUENCE [LARGE SCALE GENOMIC DNA]</scope>
    <source>
        <strain>ATCC 53774 / DSM 7210 / GS-15</strain>
    </source>
</reference>
<accession>Q39SW6</accession>
<dbReference type="EMBL" id="CP000148">
    <property type="protein sequence ID" value="ABB32658.1"/>
    <property type="molecule type" value="Genomic_DNA"/>
</dbReference>
<dbReference type="RefSeq" id="WP_004512467.1">
    <property type="nucleotide sequence ID" value="NC_007517.1"/>
</dbReference>
<dbReference type="SMR" id="Q39SW6"/>
<dbReference type="STRING" id="269799.Gmet_2433"/>
<dbReference type="KEGG" id="gme:Gmet_2433"/>
<dbReference type="eggNOG" id="COG2060">
    <property type="taxonomic scope" value="Bacteria"/>
</dbReference>
<dbReference type="HOGENOM" id="CLU_018614_3_0_7"/>
<dbReference type="Proteomes" id="UP000007073">
    <property type="component" value="Chromosome"/>
</dbReference>
<dbReference type="GO" id="GO:0005886">
    <property type="term" value="C:plasma membrane"/>
    <property type="evidence" value="ECO:0007669"/>
    <property type="project" value="UniProtKB-SubCell"/>
</dbReference>
<dbReference type="GO" id="GO:0008556">
    <property type="term" value="F:P-type potassium transmembrane transporter activity"/>
    <property type="evidence" value="ECO:0007669"/>
    <property type="project" value="InterPro"/>
</dbReference>
<dbReference type="GO" id="GO:0030955">
    <property type="term" value="F:potassium ion binding"/>
    <property type="evidence" value="ECO:0007669"/>
    <property type="project" value="UniProtKB-UniRule"/>
</dbReference>
<dbReference type="HAMAP" id="MF_00275">
    <property type="entry name" value="KdpA"/>
    <property type="match status" value="1"/>
</dbReference>
<dbReference type="InterPro" id="IPR004623">
    <property type="entry name" value="KdpA"/>
</dbReference>
<dbReference type="NCBIfam" id="TIGR00680">
    <property type="entry name" value="kdpA"/>
    <property type="match status" value="1"/>
</dbReference>
<dbReference type="PANTHER" id="PTHR30607">
    <property type="entry name" value="POTASSIUM-TRANSPORTING ATPASE A CHAIN"/>
    <property type="match status" value="1"/>
</dbReference>
<dbReference type="PANTHER" id="PTHR30607:SF2">
    <property type="entry name" value="POTASSIUM-TRANSPORTING ATPASE POTASSIUM-BINDING SUBUNIT"/>
    <property type="match status" value="1"/>
</dbReference>
<dbReference type="Pfam" id="PF03814">
    <property type="entry name" value="KdpA"/>
    <property type="match status" value="1"/>
</dbReference>
<dbReference type="PIRSF" id="PIRSF001294">
    <property type="entry name" value="K_ATPaseA"/>
    <property type="match status" value="1"/>
</dbReference>
<keyword id="KW-0997">Cell inner membrane</keyword>
<keyword id="KW-1003">Cell membrane</keyword>
<keyword id="KW-0406">Ion transport</keyword>
<keyword id="KW-0472">Membrane</keyword>
<keyword id="KW-0630">Potassium</keyword>
<keyword id="KW-0633">Potassium transport</keyword>
<keyword id="KW-1185">Reference proteome</keyword>
<keyword id="KW-0812">Transmembrane</keyword>
<keyword id="KW-1133">Transmembrane helix</keyword>
<keyword id="KW-0813">Transport</keyword>
<protein>
    <recommendedName>
        <fullName evidence="1">Potassium-transporting ATPase potassium-binding subunit</fullName>
    </recommendedName>
    <alternativeName>
        <fullName evidence="1">ATP phosphohydrolase [potassium-transporting] A chain</fullName>
    </alternativeName>
    <alternativeName>
        <fullName evidence="1">Potassium-binding and translocating subunit A</fullName>
    </alternativeName>
    <alternativeName>
        <fullName evidence="1">Potassium-translocating ATPase A chain</fullName>
    </alternativeName>
</protein>
<proteinExistence type="inferred from homology"/>
<evidence type="ECO:0000255" key="1">
    <source>
        <dbReference type="HAMAP-Rule" id="MF_00275"/>
    </source>
</evidence>